<accession>Q3YC02</accession>
<evidence type="ECO:0000250" key="1"/>
<evidence type="ECO:0000250" key="2">
    <source>
        <dbReference type="UniProtKB" id="P01225"/>
    </source>
</evidence>
<evidence type="ECO:0000305" key="3"/>
<reference key="1">
    <citation type="submission" date="2005-07" db="EMBL/GenBank/DDBJ databases">
        <title>Molecular cloning of glycoprotein alpha-subunit and follicle stimulating hormone and luteinizing hormone beta-subunits from the Bolivian squirrel monkey.</title>
        <authorList>
            <person name="Scammell J.G."/>
            <person name="Moyer F.S."/>
            <person name="Gibson S.V."/>
            <person name="Valentine D.L."/>
        </authorList>
    </citation>
    <scope>NUCLEOTIDE SEQUENCE [MRNA]</scope>
</reference>
<organism>
    <name type="scientific">Saimiri boliviensis boliviensis</name>
    <name type="common">Bolivian squirrel monkey</name>
    <dbReference type="NCBI Taxonomy" id="39432"/>
    <lineage>
        <taxon>Eukaryota</taxon>
        <taxon>Metazoa</taxon>
        <taxon>Chordata</taxon>
        <taxon>Craniata</taxon>
        <taxon>Vertebrata</taxon>
        <taxon>Euteleostomi</taxon>
        <taxon>Mammalia</taxon>
        <taxon>Eutheria</taxon>
        <taxon>Euarchontoglires</taxon>
        <taxon>Primates</taxon>
        <taxon>Haplorrhini</taxon>
        <taxon>Platyrrhini</taxon>
        <taxon>Cebidae</taxon>
        <taxon>Saimiriinae</taxon>
        <taxon>Saimiri</taxon>
    </lineage>
</organism>
<feature type="signal peptide" evidence="1">
    <location>
        <begin position="1"/>
        <end position="20"/>
    </location>
</feature>
<feature type="chain" id="PRO_0000253467" description="Follitropin subunit beta">
    <location>
        <begin position="21"/>
        <end position="129"/>
    </location>
</feature>
<feature type="glycosylation site" description="N-linked (GlcNAc...) asparagine" evidence="2">
    <location>
        <position position="25"/>
    </location>
</feature>
<feature type="glycosylation site" description="N-linked (GlcNAc...) asparagine" evidence="2">
    <location>
        <position position="42"/>
    </location>
</feature>
<feature type="disulfide bond" evidence="2">
    <location>
        <begin position="21"/>
        <end position="69"/>
    </location>
</feature>
<feature type="disulfide bond" evidence="2">
    <location>
        <begin position="35"/>
        <end position="84"/>
    </location>
</feature>
<feature type="disulfide bond" evidence="2">
    <location>
        <begin position="38"/>
        <end position="122"/>
    </location>
</feature>
<feature type="disulfide bond" evidence="2">
    <location>
        <begin position="46"/>
        <end position="100"/>
    </location>
</feature>
<feature type="disulfide bond" evidence="2">
    <location>
        <begin position="50"/>
        <end position="102"/>
    </location>
</feature>
<feature type="disulfide bond" evidence="2">
    <location>
        <begin position="105"/>
        <end position="112"/>
    </location>
</feature>
<protein>
    <recommendedName>
        <fullName>Follitropin subunit beta</fullName>
    </recommendedName>
    <alternativeName>
        <fullName>Follicle-stimulating hormone beta subunit</fullName>
        <shortName>FSH-B</shortName>
        <shortName>FSH-beta</shortName>
    </alternativeName>
    <alternativeName>
        <fullName>Follitropin beta chain</fullName>
    </alternativeName>
</protein>
<proteinExistence type="evidence at transcript level"/>
<sequence length="129" mass="14529">MKTVQFCFLFCCWKAICCNSCELTNITIAIENEECHFCISINTTWCAGYCYTRDLVFKDPATPNIQTTCTFKELVYETVRVPGCAHHADSLYTYPVATQCHCGKCDSDSTDCTTQGLGPDYCSFSEMKE</sequence>
<gene>
    <name type="primary">FSHB</name>
</gene>
<comment type="function">
    <text evidence="2">Together with the alpha chain CGA constitutes follitropin, the follicle-stimulating hormone, and provides its biological specificity to the hormone heterodimer. Binds FSHR, a G protein-coupled receptor, on target cells to activate downstream signaling pathways. Follitropin is involved in follicle development and spermatogenesis in reproductive organs.</text>
</comment>
<comment type="subunit">
    <text evidence="2">Heterodimer. The active follitropin is a heterodimer composed of an alpha chain/CGA shared with other hormones and a unique beta chain/FSHB shown here.</text>
</comment>
<comment type="subcellular location">
    <subcellularLocation>
        <location evidence="2">Secreted</location>
    </subcellularLocation>
    <text evidence="2">Efficient secretion requires dimerization with CGA.</text>
</comment>
<comment type="similarity">
    <text evidence="3">Belongs to the glycoprotein hormones subunit beta family.</text>
</comment>
<dbReference type="EMBL" id="DQ143873">
    <property type="protein sequence ID" value="AAZ73617.1"/>
    <property type="molecule type" value="mRNA"/>
</dbReference>
<dbReference type="RefSeq" id="XP_003919998.1">
    <property type="nucleotide sequence ID" value="XM_003919949.2"/>
</dbReference>
<dbReference type="SMR" id="Q3YC02"/>
<dbReference type="STRING" id="39432.ENSSBOP00000037534"/>
<dbReference type="GlyCosmos" id="Q3YC02">
    <property type="glycosylation" value="2 sites, No reported glycans"/>
</dbReference>
<dbReference type="Ensembl" id="ENSSBOT00000054476.1">
    <property type="protein sequence ID" value="ENSSBOP00000037534.1"/>
    <property type="gene ID" value="ENSSBOG00000034865.1"/>
</dbReference>
<dbReference type="GeneID" id="101041141"/>
<dbReference type="KEGG" id="sbq:101041141"/>
<dbReference type="CTD" id="2488"/>
<dbReference type="GeneTree" id="ENSGT00940000160051"/>
<dbReference type="OMA" id="PVATGCH"/>
<dbReference type="OrthoDB" id="54098at9443"/>
<dbReference type="Proteomes" id="UP000233220">
    <property type="component" value="Unplaced"/>
</dbReference>
<dbReference type="GO" id="GO:0005737">
    <property type="term" value="C:cytoplasm"/>
    <property type="evidence" value="ECO:0007669"/>
    <property type="project" value="Ensembl"/>
</dbReference>
<dbReference type="GO" id="GO:0005615">
    <property type="term" value="C:extracellular space"/>
    <property type="evidence" value="ECO:0000250"/>
    <property type="project" value="UniProtKB"/>
</dbReference>
<dbReference type="GO" id="GO:0016914">
    <property type="term" value="C:follicle-stimulating hormone complex"/>
    <property type="evidence" value="ECO:0000250"/>
    <property type="project" value="UniProtKB"/>
</dbReference>
<dbReference type="GO" id="GO:0016913">
    <property type="term" value="F:follicle-stimulating hormone activity"/>
    <property type="evidence" value="ECO:0000250"/>
    <property type="project" value="UniProtKB"/>
</dbReference>
<dbReference type="GO" id="GO:0042699">
    <property type="term" value="P:follicle-stimulating hormone signaling pathway"/>
    <property type="evidence" value="ECO:0007669"/>
    <property type="project" value="Ensembl"/>
</dbReference>
<dbReference type="GO" id="GO:0007186">
    <property type="term" value="P:G protein-coupled receptor signaling pathway"/>
    <property type="evidence" value="ECO:0000250"/>
    <property type="project" value="UniProtKB"/>
</dbReference>
<dbReference type="GO" id="GO:0045780">
    <property type="term" value="P:positive regulation of bone resorption"/>
    <property type="evidence" value="ECO:0007669"/>
    <property type="project" value="Ensembl"/>
</dbReference>
<dbReference type="GO" id="GO:0010628">
    <property type="term" value="P:positive regulation of gene expression"/>
    <property type="evidence" value="ECO:0007669"/>
    <property type="project" value="Ensembl"/>
</dbReference>
<dbReference type="GO" id="GO:0010893">
    <property type="term" value="P:positive regulation of steroid biosynthetic process"/>
    <property type="evidence" value="ECO:0007669"/>
    <property type="project" value="Ensembl"/>
</dbReference>
<dbReference type="GO" id="GO:0045670">
    <property type="term" value="P:regulation of osteoclast differentiation"/>
    <property type="evidence" value="ECO:0007669"/>
    <property type="project" value="Ensembl"/>
</dbReference>
<dbReference type="GO" id="GO:0010469">
    <property type="term" value="P:regulation of signaling receptor activity"/>
    <property type="evidence" value="ECO:0000250"/>
    <property type="project" value="UniProtKB"/>
</dbReference>
<dbReference type="GO" id="GO:0060011">
    <property type="term" value="P:Sertoli cell proliferation"/>
    <property type="evidence" value="ECO:0007669"/>
    <property type="project" value="Ensembl"/>
</dbReference>
<dbReference type="GO" id="GO:0007283">
    <property type="term" value="P:spermatogenesis"/>
    <property type="evidence" value="ECO:0007669"/>
    <property type="project" value="Ensembl"/>
</dbReference>
<dbReference type="GO" id="GO:0007179">
    <property type="term" value="P:transforming growth factor beta receptor signaling pathway"/>
    <property type="evidence" value="ECO:0007669"/>
    <property type="project" value="Ensembl"/>
</dbReference>
<dbReference type="CDD" id="cd00069">
    <property type="entry name" value="GHB_like"/>
    <property type="match status" value="1"/>
</dbReference>
<dbReference type="FunFam" id="2.10.90.10:FF:000007">
    <property type="entry name" value="Luteinizing hormone beta subunit"/>
    <property type="match status" value="1"/>
</dbReference>
<dbReference type="Gene3D" id="2.10.90.10">
    <property type="entry name" value="Cystine-knot cytokines"/>
    <property type="match status" value="1"/>
</dbReference>
<dbReference type="InterPro" id="IPR029034">
    <property type="entry name" value="Cystine-knot_cytokine"/>
</dbReference>
<dbReference type="InterPro" id="IPR006208">
    <property type="entry name" value="Glyco_hormone_CN"/>
</dbReference>
<dbReference type="InterPro" id="IPR001545">
    <property type="entry name" value="Gonadotropin_bsu"/>
</dbReference>
<dbReference type="InterPro" id="IPR018245">
    <property type="entry name" value="Gonadotropin_bsu_CS"/>
</dbReference>
<dbReference type="PANTHER" id="PTHR11515:SF17">
    <property type="entry name" value="FOLLITROPIN SUBUNIT BETA"/>
    <property type="match status" value="1"/>
</dbReference>
<dbReference type="PANTHER" id="PTHR11515">
    <property type="entry name" value="GLYCOPROTEIN HORMONE BETA CHAIN"/>
    <property type="match status" value="1"/>
</dbReference>
<dbReference type="Pfam" id="PF00007">
    <property type="entry name" value="Cys_knot"/>
    <property type="match status" value="1"/>
</dbReference>
<dbReference type="SMART" id="SM00068">
    <property type="entry name" value="GHB"/>
    <property type="match status" value="1"/>
</dbReference>
<dbReference type="SUPFAM" id="SSF57501">
    <property type="entry name" value="Cystine-knot cytokines"/>
    <property type="match status" value="1"/>
</dbReference>
<dbReference type="PROSITE" id="PS00261">
    <property type="entry name" value="GLYCO_HORMONE_BETA_1"/>
    <property type="match status" value="1"/>
</dbReference>
<dbReference type="PROSITE" id="PS00689">
    <property type="entry name" value="GLYCO_HORMONE_BETA_2"/>
    <property type="match status" value="1"/>
</dbReference>
<name>FSHB_SAIBB</name>
<keyword id="KW-1015">Disulfide bond</keyword>
<keyword id="KW-0325">Glycoprotein</keyword>
<keyword id="KW-0372">Hormone</keyword>
<keyword id="KW-1185">Reference proteome</keyword>
<keyword id="KW-0964">Secreted</keyword>
<keyword id="KW-0732">Signal</keyword>